<organism>
    <name type="scientific">Triticum aestivum</name>
    <name type="common">Wheat</name>
    <dbReference type="NCBI Taxonomy" id="4565"/>
    <lineage>
        <taxon>Eukaryota</taxon>
        <taxon>Viridiplantae</taxon>
        <taxon>Streptophyta</taxon>
        <taxon>Embryophyta</taxon>
        <taxon>Tracheophyta</taxon>
        <taxon>Spermatophyta</taxon>
        <taxon>Magnoliopsida</taxon>
        <taxon>Liliopsida</taxon>
        <taxon>Poales</taxon>
        <taxon>Poaceae</taxon>
        <taxon>BOP clade</taxon>
        <taxon>Pooideae</taxon>
        <taxon>Triticodae</taxon>
        <taxon>Triticeae</taxon>
        <taxon>Triticinae</taxon>
        <taxon>Triticum</taxon>
    </lineage>
</organism>
<evidence type="ECO:0000255" key="1"/>
<evidence type="ECO:0000255" key="2">
    <source>
        <dbReference type="PROSITE-ProRule" id="PRU00285"/>
    </source>
</evidence>
<evidence type="ECO:0000256" key="3">
    <source>
        <dbReference type="SAM" id="MobiDB-lite"/>
    </source>
</evidence>
<reference key="1">
    <citation type="journal article" date="1991" name="Plant Mol. Biol.">
        <title>Nucleotide sequence of a Triticum aestivum cDNA clone which is homologous to the 26 kDa chloroplast-localized heat shock protein gene of maize.</title>
        <authorList>
            <person name="Weng J."/>
            <person name="Wang Z.F."/>
            <person name="Nguyen H.T."/>
        </authorList>
    </citation>
    <scope>NUCLEOTIDE SEQUENCE [MRNA]</scope>
    <source>
        <strain>cv. Mustang</strain>
        <tissue>Leaf</tissue>
    </source>
</reference>
<keyword id="KW-0150">Chloroplast</keyword>
<keyword id="KW-0934">Plastid</keyword>
<keyword id="KW-1185">Reference proteome</keyword>
<keyword id="KW-0346">Stress response</keyword>
<keyword id="KW-0809">Transit peptide</keyword>
<gene>
    <name type="primary">HSP21</name>
    <name type="synonym">HSP26.6</name>
</gene>
<proteinExistence type="evidence at transcript level"/>
<accession>Q00445</accession>
<protein>
    <recommendedName>
        <fullName>Small heat shock protein, chloroplastic</fullName>
    </recommendedName>
    <alternativeName>
        <fullName>Heat shock protein 26.6</fullName>
    </alternativeName>
</protein>
<name>HS21C_WHEAT</name>
<comment type="subcellular location">
    <subcellularLocation>
        <location>Plastid</location>
        <location>Chloroplast</location>
    </subcellularLocation>
</comment>
<comment type="similarity">
    <text evidence="2">Belongs to the small heat shock protein (HSP20) family.</text>
</comment>
<sequence length="238" mass="26596">MAAANAPFALVSRLSPAARLPIRAWRAARPAPLSTGGRTRPLSVASAAQENRDNSVDVQVSQAQNAGNQQGNAVQRRPRRAGFDISPFGLVDPMSPMRTMRQMLDTMDRLFDDAVGFPTRRSPAARARRRMPWDIMEDEKEVKMRFDMPGLSREEVRVMVEDDALVIRGEHKKEAGEGQGEGGDGWWKERSVSSYDMRLALPDECDKSQVRAELKNGVLLVSVPKRETERKVIDVQVQ</sequence>
<feature type="transit peptide" description="Chloroplast" evidence="1">
    <location>
        <begin position="1"/>
        <end status="unknown"/>
    </location>
</feature>
<feature type="chain" id="PRO_0000013535" description="Small heat shock protein, chloroplastic">
    <location>
        <begin status="unknown"/>
        <end position="238"/>
    </location>
</feature>
<feature type="domain" description="sHSP" evidence="2">
    <location>
        <begin position="124"/>
        <end position="238"/>
    </location>
</feature>
<feature type="region of interest" description="Disordered" evidence="3">
    <location>
        <begin position="31"/>
        <end position="87"/>
    </location>
</feature>
<feature type="compositionally biased region" description="Low complexity" evidence="3">
    <location>
        <begin position="58"/>
        <end position="75"/>
    </location>
</feature>
<dbReference type="EMBL" id="X58280">
    <property type="protein sequence ID" value="CAA41219.1"/>
    <property type="molecule type" value="mRNA"/>
</dbReference>
<dbReference type="SMR" id="Q00445"/>
<dbReference type="STRING" id="4565.Q00445"/>
<dbReference type="PaxDb" id="4565-Traes_4AS_8BA1E69CA.1"/>
<dbReference type="eggNOG" id="KOG0710">
    <property type="taxonomic scope" value="Eukaryota"/>
</dbReference>
<dbReference type="Proteomes" id="UP000019116">
    <property type="component" value="Unplaced"/>
</dbReference>
<dbReference type="ExpressionAtlas" id="Q00445">
    <property type="expression patterns" value="baseline and differential"/>
</dbReference>
<dbReference type="GO" id="GO:0009507">
    <property type="term" value="C:chloroplast"/>
    <property type="evidence" value="ECO:0007669"/>
    <property type="project" value="UniProtKB-SubCell"/>
</dbReference>
<dbReference type="GO" id="GO:0009408">
    <property type="term" value="P:response to heat"/>
    <property type="evidence" value="ECO:0007669"/>
    <property type="project" value="InterPro"/>
</dbReference>
<dbReference type="CDD" id="cd06464">
    <property type="entry name" value="ACD_sHsps-like"/>
    <property type="match status" value="1"/>
</dbReference>
<dbReference type="FunFam" id="2.60.40.790:FF:000059">
    <property type="entry name" value="26.5 kDa heat shock protein, mitochondrial"/>
    <property type="match status" value="1"/>
</dbReference>
<dbReference type="Gene3D" id="2.60.40.790">
    <property type="match status" value="1"/>
</dbReference>
<dbReference type="InterPro" id="IPR002068">
    <property type="entry name" value="A-crystallin/Hsp20_dom"/>
</dbReference>
<dbReference type="InterPro" id="IPR008978">
    <property type="entry name" value="HSP20-like_chaperone"/>
</dbReference>
<dbReference type="InterPro" id="IPR044587">
    <property type="entry name" value="HSP21-like"/>
</dbReference>
<dbReference type="PANTHER" id="PTHR46733">
    <property type="entry name" value="26.5 KDA HEAT SHOCK PROTEIN, MITOCHONDRIAL"/>
    <property type="match status" value="1"/>
</dbReference>
<dbReference type="PANTHER" id="PTHR46733:SF4">
    <property type="entry name" value="HEAT SHOCK PROTEIN 21, CHLOROPLASTIC"/>
    <property type="match status" value="1"/>
</dbReference>
<dbReference type="Pfam" id="PF00011">
    <property type="entry name" value="HSP20"/>
    <property type="match status" value="1"/>
</dbReference>
<dbReference type="SUPFAM" id="SSF49764">
    <property type="entry name" value="HSP20-like chaperones"/>
    <property type="match status" value="1"/>
</dbReference>
<dbReference type="PROSITE" id="PS01031">
    <property type="entry name" value="SHSP"/>
    <property type="match status" value="1"/>
</dbReference>